<gene>
    <name evidence="5 12" type="primary">eat-17</name>
    <name evidence="12" type="synonym">tbc-4</name>
    <name evidence="12" type="ORF">T24D11.1</name>
</gene>
<sequence length="888" mass="101803">MVPSPALVGTPSVFPHHQSTSFFQETASFFNLDWERLWHSRSNSNSTSSPRNSPSQLSPPMAATAALRRSSDYGSADTECGEPCETGAPVSLNEVDLLAKMEQLNKSNEEDSRSVASKKTGSSESRKGAREHSPEEDEYFQEDLWSVWGELILNWEIEVKKRPNYIKDLVKRGIPQHFRMIAWQNLSNASVSSVHDLYSDYMRQSSVYEKVIQRDIPRTYPELDFFKDGERGQSLLFNVIKAYSVHDKEVGYCQGSAFIVGLLLLQMPEEEAFAVLVSLMENYRLRELYKPTMTDLGLCMFQLECLVQDQMPDLYTHFNNMGFDTSMYASSWFLTLFTTTMPLDIANRIMDCFLVEGMDFIFCISIAILQQARIELLRLDMEGMLKYFQREVRERYEFDADLLFTVANQVQLNAKRMKRLEKDYLTKRTKEQEEAVELRRLRTENRLLRQRIDYLEAESSALADRLVKGQVNLAQEAENYINIAHELNKLRDMNSDVHRKLEGAYETIRELSSARRDNIMDTGTQVDDTSMIEHIHSLQQELIEAHTRQADSENTLRDAKLRVSELEMANKRLLENEPSEDVAGLQEELISVKMREAESSLALKEMRQRLAELEQHWAKYVHVRAFDPSSASIEKESTSEAHSTQQQPSPPLTSARARLAKITASLIGGSTEETDNCISVRELEDQLMGVRIKEADTLAELKEMRQKVMELETQNHVCTNQLKRQDEEMKRVREDSEVLVKKRKELEDQLKDEKEKLDNKESEFNEGRINDRLKYSEAMQTIQDLQSSISQLELKKAEKWTQNQLRGSSVCDLDEESNSHGSICSNVDHLSLASDEMNALLADMTVRIPTLDDLAEEGSATETDELRPKELNDGNDTTDSGVQLSDSH</sequence>
<comment type="function">
    <text evidence="4 5">Rab GTPase activating protein for the small GTPase rab-6.2 (PubMed:23792950). Required for grinder formation, which is the feeding organ that breaks down food (PubMed:23792950).</text>
</comment>
<comment type="subunit">
    <text evidence="4">May interact with rab-6.2 (in GTP-bound form).</text>
</comment>
<comment type="alternative products">
    <event type="alternative splicing"/>
    <isoform>
        <id>S6F527-1</id>
        <name evidence="12">e</name>
        <sequence type="displayed"/>
    </isoform>
    <isoform>
        <id>S6F527-2</id>
        <name evidence="8">a</name>
        <sequence type="described" ref="VSP_061178 VSP_061179"/>
    </isoform>
    <isoform>
        <id>S6F527-3</id>
        <name evidence="9">b</name>
        <sequence type="described" ref="VSP_061179"/>
    </isoform>
    <isoform>
        <id>S6F527-4</id>
        <name evidence="10">c</name>
        <sequence type="described" ref="VSP_061176"/>
    </isoform>
    <isoform>
        <id>S6F527-5</id>
        <name evidence="11">d</name>
        <sequence type="described" ref="VSP_061177 VSP_061179"/>
    </isoform>
    <isoform>
        <id>S6F527-6</id>
        <name evidence="13">f</name>
        <sequence type="described" ref="VSP_061175"/>
    </isoform>
</comment>
<comment type="tissue specificity">
    <text evidence="4">Highly expressed in the terminal bulb muscles, pharyngeal muscle, in intestine and vulva.</text>
</comment>
<keyword id="KW-0025">Alternative splicing</keyword>
<keyword id="KW-0175">Coiled coil</keyword>
<keyword id="KW-0343">GTPase activation</keyword>
<keyword id="KW-1185">Reference proteome</keyword>
<feature type="chain" id="PRO_0000453575" description="Rab GTPase-activating protein eat-17">
    <location>
        <begin position="1"/>
        <end position="888"/>
    </location>
</feature>
<feature type="domain" description="Rab-GAP TBC" evidence="2">
    <location>
        <begin position="173"/>
        <end position="357"/>
    </location>
</feature>
<feature type="region of interest" description="Disordered" evidence="3">
    <location>
        <begin position="41"/>
        <end position="87"/>
    </location>
</feature>
<feature type="region of interest" description="Disordered" evidence="3">
    <location>
        <begin position="104"/>
        <end position="135"/>
    </location>
</feature>
<feature type="region of interest" description="Disordered" evidence="3">
    <location>
        <begin position="631"/>
        <end position="654"/>
    </location>
</feature>
<feature type="region of interest" description="Disordered" evidence="3">
    <location>
        <begin position="854"/>
        <end position="888"/>
    </location>
</feature>
<feature type="coiled-coil region" evidence="1">
    <location>
        <begin position="694"/>
        <end position="770"/>
    </location>
</feature>
<feature type="compositionally biased region" description="Low complexity" evidence="3">
    <location>
        <begin position="41"/>
        <end position="60"/>
    </location>
</feature>
<feature type="compositionally biased region" description="Polar residues" evidence="3">
    <location>
        <begin position="114"/>
        <end position="123"/>
    </location>
</feature>
<feature type="compositionally biased region" description="Basic and acidic residues" evidence="3">
    <location>
        <begin position="124"/>
        <end position="133"/>
    </location>
</feature>
<feature type="compositionally biased region" description="Polar residues" evidence="3">
    <location>
        <begin position="874"/>
        <end position="888"/>
    </location>
</feature>
<feature type="splice variant" id="VSP_061175" description="In isoform f." evidence="6">
    <location>
        <begin position="1"/>
        <end position="492"/>
    </location>
</feature>
<feature type="splice variant" id="VSP_061176" description="In isoform c." evidence="6">
    <original>MVPSPALVGTPSVFPHHQSTSFFQETASFFNLDWERLWHSRSNSNSTSSPRNSPSQLSPPMAATAALRRSSDYGSADTECGEPCETGAPVSLNEVDLLAKMEQLNKSNEEDSRSVASKKTGSSESRKGAREHSPEEDEYFQEDLWSVWGELILNWEIEVKKRPNYIKDLVKRGIPQHFRMIAWQNLSNASVSSVHDLYSDYMRQSSVYEKVIQRDIPRTYPELDFFKDGERGQSLLFNVIKAYSVHDKEVGYCQGSAFIVGLLLLQMPEEEAFAVLVSLMENYRLRELYKPTMTDLGLCMFQLECLVQDQMPDLYTHFNNMGFDTSMYASSWFLTLFTTTMPLDIANRIMDCFLVEGMDFIFCISIAILQQARIELLRLDMEGMLKYFQREVRERYEFDADLLFTVANQVQLNAKRMKRLEKDYLTKRTKEQEEAVELR</original>
    <variation>MRTRAQIGKQRFVWTKK</variation>
    <location>
        <begin position="1"/>
        <end position="439"/>
    </location>
</feature>
<feature type="splice variant" id="VSP_061177" description="In isoform d." evidence="6">
    <location>
        <begin position="1"/>
        <end position="100"/>
    </location>
</feature>
<feature type="splice variant" id="VSP_061178" description="In isoform a." evidence="6">
    <location>
        <begin position="1"/>
        <end position="60"/>
    </location>
</feature>
<feature type="splice variant" id="VSP_061179" description="In isoform a, isoform b and isoform d." evidence="6">
    <location>
        <begin position="139"/>
        <end position="141"/>
    </location>
</feature>
<feature type="mutagenesis site" description="Grinder formation defects are rescued in 1.6% of animals in an eat-17 ad707 mutant background." evidence="4">
    <original>R</original>
    <variation>A</variation>
    <location>
        <position position="179"/>
    </location>
</feature>
<feature type="mutagenesis site" description="Grinder formation defects are rescued in 4.1% of animals in an eat-17 ad707 mutant background." evidence="4">
    <original>R</original>
    <variation>K</variation>
    <location>
        <position position="179"/>
    </location>
</feature>
<feature type="mutagenesis site" description="In ad707; defective grinder formation characterized by disorganized cuticle ridges in the grinder and the absence of grinder plates resulting in ineffective grinding of bacteria." evidence="4">
    <location>
        <begin position="266"/>
        <end position="888"/>
    </location>
</feature>
<organism evidence="7">
    <name type="scientific">Caenorhabditis elegans</name>
    <dbReference type="NCBI Taxonomy" id="6239"/>
    <lineage>
        <taxon>Eukaryota</taxon>
        <taxon>Metazoa</taxon>
        <taxon>Ecdysozoa</taxon>
        <taxon>Nematoda</taxon>
        <taxon>Chromadorea</taxon>
        <taxon>Rhabditida</taxon>
        <taxon>Rhabditina</taxon>
        <taxon>Rhabditomorpha</taxon>
        <taxon>Rhabditoidea</taxon>
        <taxon>Rhabditidae</taxon>
        <taxon>Peloderinae</taxon>
        <taxon>Caenorhabditis</taxon>
    </lineage>
</organism>
<reference evidence="7" key="1">
    <citation type="journal article" date="1998" name="Science">
        <title>Genome sequence of the nematode C. elegans: a platform for investigating biology.</title>
        <authorList>
            <consortium name="The C. elegans sequencing consortium"/>
        </authorList>
    </citation>
    <scope>NUCLEOTIDE SEQUENCE [LARGE SCALE GENOMIC DNA]</scope>
    <source>
        <strain evidence="7">Bristol N2</strain>
    </source>
</reference>
<reference evidence="6" key="2">
    <citation type="journal article" date="2013" name="Genetics">
        <title>The jaw of the worm: GTPase-activating protein EAT-17 regulates grinder formation in Caenorhabditis elegans.</title>
        <authorList>
            <person name="Straud S."/>
            <person name="Lee I."/>
            <person name="Song B."/>
            <person name="Avery L."/>
            <person name="You Y.J."/>
        </authorList>
    </citation>
    <scope>FUNCTION</scope>
    <scope>INTERACTION WITH RAB-6.2</scope>
    <scope>TISSUE SPECIFICITY</scope>
    <scope>MUTAGENESIS OF ARG-179 AND 266-GLN--HIS-888</scope>
</reference>
<dbReference type="EMBL" id="BX284606">
    <property type="protein sequence ID" value="CCD68908.1"/>
    <property type="molecule type" value="Genomic_DNA"/>
</dbReference>
<dbReference type="EMBL" id="BX284606">
    <property type="protein sequence ID" value="CDG24093.1"/>
    <property type="molecule type" value="Genomic_DNA"/>
</dbReference>
<dbReference type="EMBL" id="BX284606">
    <property type="protein sequence ID" value="CDG24094.1"/>
    <property type="molecule type" value="Genomic_DNA"/>
</dbReference>
<dbReference type="EMBL" id="BX284606">
    <property type="protein sequence ID" value="CDG24095.1"/>
    <property type="molecule type" value="Genomic_DNA"/>
</dbReference>
<dbReference type="EMBL" id="BX284606">
    <property type="protein sequence ID" value="CDG24096.1"/>
    <property type="molecule type" value="Genomic_DNA"/>
</dbReference>
<dbReference type="EMBL" id="BX284606">
    <property type="protein sequence ID" value="CDH93027.1"/>
    <property type="molecule type" value="Genomic_DNA"/>
</dbReference>
<dbReference type="PIR" id="T29353">
    <property type="entry name" value="T29353"/>
</dbReference>
<dbReference type="RefSeq" id="NP_001294781.1">
    <molecule id="S6F527-2"/>
    <property type="nucleotide sequence ID" value="NM_001307852.3"/>
</dbReference>
<dbReference type="RefSeq" id="NP_001294782.1">
    <molecule id="S6F527-3"/>
    <property type="nucleotide sequence ID" value="NM_001307853.5"/>
</dbReference>
<dbReference type="RefSeq" id="NP_001294783.1">
    <molecule id="S6F527-5"/>
    <property type="nucleotide sequence ID" value="NM_001307854.3"/>
</dbReference>
<dbReference type="RefSeq" id="NP_001294784.1">
    <molecule id="S6F527-1"/>
    <property type="nucleotide sequence ID" value="NM_001307855.6"/>
</dbReference>
<dbReference type="RefSeq" id="NP_001294848.1">
    <molecule id="S6F527-6"/>
    <property type="nucleotide sequence ID" value="NM_001307919.3"/>
</dbReference>
<dbReference type="RefSeq" id="NP_510666.1">
    <molecule id="S6F527-4"/>
    <property type="nucleotide sequence ID" value="NM_078265.4"/>
</dbReference>
<dbReference type="SMR" id="S6F527"/>
<dbReference type="DIP" id="DIP-27429N"/>
<dbReference type="FunCoup" id="S6F527">
    <property type="interactions" value="1764"/>
</dbReference>
<dbReference type="IntAct" id="S6F527">
    <property type="interactions" value="3"/>
</dbReference>
<dbReference type="STRING" id="6239.T24D11.1e.1"/>
<dbReference type="PaxDb" id="6239-T24D11.1e"/>
<dbReference type="EnsemblMetazoa" id="T24D11.1a.1">
    <molecule id="S6F527-2"/>
    <property type="protein sequence ID" value="T24D11.1a.1"/>
    <property type="gene ID" value="WBGene00020770"/>
</dbReference>
<dbReference type="EnsemblMetazoa" id="T24D11.1b.1">
    <molecule id="S6F527-3"/>
    <property type="protein sequence ID" value="T24D11.1b.1"/>
    <property type="gene ID" value="WBGene00020770"/>
</dbReference>
<dbReference type="EnsemblMetazoa" id="T24D11.1c.1">
    <molecule id="S6F527-4"/>
    <property type="protein sequence ID" value="T24D11.1c.1"/>
    <property type="gene ID" value="WBGene00020770"/>
</dbReference>
<dbReference type="EnsemblMetazoa" id="T24D11.1d.1">
    <molecule id="S6F527-5"/>
    <property type="protein sequence ID" value="T24D11.1d.1"/>
    <property type="gene ID" value="WBGene00020770"/>
</dbReference>
<dbReference type="EnsemblMetazoa" id="T24D11.1e.1">
    <molecule id="S6F527-1"/>
    <property type="protein sequence ID" value="T24D11.1e.1"/>
    <property type="gene ID" value="WBGene00020770"/>
</dbReference>
<dbReference type="EnsemblMetazoa" id="T24D11.1f.1">
    <molecule id="S6F527-6"/>
    <property type="protein sequence ID" value="T24D11.1f.1"/>
    <property type="gene ID" value="WBGene00020770"/>
</dbReference>
<dbReference type="GeneID" id="3565805"/>
<dbReference type="KEGG" id="cel:CELE_T24D11.1"/>
<dbReference type="UCSC" id="F01G12.6">
    <property type="organism name" value="c. elegans"/>
</dbReference>
<dbReference type="AGR" id="WB:WBGene00020770"/>
<dbReference type="CTD" id="3565805"/>
<dbReference type="WormBase" id="T24D11.1a">
    <molecule id="S6F527-2"/>
    <property type="protein sequence ID" value="CE48459"/>
    <property type="gene ID" value="WBGene00020770"/>
    <property type="gene designation" value="eat-17"/>
</dbReference>
<dbReference type="WormBase" id="T24D11.1b">
    <molecule id="S6F527-3"/>
    <property type="protein sequence ID" value="CE48495"/>
    <property type="gene ID" value="WBGene00020770"/>
    <property type="gene designation" value="eat-17"/>
</dbReference>
<dbReference type="WormBase" id="T24D11.1c">
    <molecule id="S6F527-4"/>
    <property type="protein sequence ID" value="CE07015"/>
    <property type="gene ID" value="WBGene00020770"/>
    <property type="gene designation" value="eat-17"/>
</dbReference>
<dbReference type="WormBase" id="T24D11.1d">
    <molecule id="S6F527-5"/>
    <property type="protein sequence ID" value="CE48465"/>
    <property type="gene ID" value="WBGene00020770"/>
    <property type="gene designation" value="eat-17"/>
</dbReference>
<dbReference type="WormBase" id="T24D11.1e">
    <molecule id="S6F527-1"/>
    <property type="protein sequence ID" value="CE48484"/>
    <property type="gene ID" value="WBGene00020770"/>
    <property type="gene designation" value="eat-17"/>
</dbReference>
<dbReference type="WormBase" id="T24D11.1f">
    <molecule id="S6F527-6"/>
    <property type="protein sequence ID" value="CE48533"/>
    <property type="gene ID" value="WBGene00020770"/>
    <property type="gene designation" value="eat-17"/>
</dbReference>
<dbReference type="eggNOG" id="KOG4436">
    <property type="taxonomic scope" value="Eukaryota"/>
</dbReference>
<dbReference type="GeneTree" id="ENSGT00940000169844"/>
<dbReference type="HOGENOM" id="CLU_553888_0_0_1"/>
<dbReference type="InParanoid" id="S6F527"/>
<dbReference type="OMA" id="LWGHIVA"/>
<dbReference type="OrthoDB" id="295078at2759"/>
<dbReference type="PRO" id="PR:S6F527"/>
<dbReference type="Proteomes" id="UP000001940">
    <property type="component" value="Chromosome X"/>
</dbReference>
<dbReference type="Bgee" id="WBGene00020770">
    <property type="expression patterns" value="Expressed in pharyngeal muscle cell (C elegans) and 3 other cell types or tissues"/>
</dbReference>
<dbReference type="ExpressionAtlas" id="S6F527">
    <property type="expression patterns" value="baseline and differential"/>
</dbReference>
<dbReference type="GO" id="GO:0098981">
    <property type="term" value="C:cholinergic synapse"/>
    <property type="evidence" value="ECO:0000314"/>
    <property type="project" value="SynGO"/>
</dbReference>
<dbReference type="GO" id="GO:0098793">
    <property type="term" value="C:presynapse"/>
    <property type="evidence" value="ECO:0007669"/>
    <property type="project" value="GOC"/>
</dbReference>
<dbReference type="GO" id="GO:0005096">
    <property type="term" value="F:GTPase activator activity"/>
    <property type="evidence" value="ECO:0000318"/>
    <property type="project" value="GO_Central"/>
</dbReference>
<dbReference type="GO" id="GO:2000253">
    <property type="term" value="P:positive regulation of feeding behavior"/>
    <property type="evidence" value="ECO:0000315"/>
    <property type="project" value="UniProtKB"/>
</dbReference>
<dbReference type="GO" id="GO:0099161">
    <property type="term" value="P:regulation of presynaptic dense core granule exocytosis"/>
    <property type="evidence" value="ECO:0000314"/>
    <property type="project" value="SynGO"/>
</dbReference>
<dbReference type="FunFam" id="1.10.472.80:FF:000002">
    <property type="entry name" value="Ecotropic viral integration site 5"/>
    <property type="match status" value="1"/>
</dbReference>
<dbReference type="FunFam" id="1.10.10.750:FF:000003">
    <property type="entry name" value="GTPase activating protein (Evi5)"/>
    <property type="match status" value="1"/>
</dbReference>
<dbReference type="FunFam" id="1.10.8.270:FF:000001">
    <property type="entry name" value="TBC1 domain family member 1"/>
    <property type="match status" value="1"/>
</dbReference>
<dbReference type="Gene3D" id="1.10.8.270">
    <property type="entry name" value="putative rabgap domain of human tbc1 domain family member 14 like domains"/>
    <property type="match status" value="1"/>
</dbReference>
<dbReference type="Gene3D" id="1.10.10.750">
    <property type="entry name" value="Ypt/Rab-GAP domain of gyp1p, domain 1"/>
    <property type="match status" value="1"/>
</dbReference>
<dbReference type="Gene3D" id="1.10.472.80">
    <property type="entry name" value="Ypt/Rab-GAP domain of gyp1p, domain 3"/>
    <property type="match status" value="1"/>
</dbReference>
<dbReference type="InterPro" id="IPR000195">
    <property type="entry name" value="Rab-GAP-TBC_dom"/>
</dbReference>
<dbReference type="InterPro" id="IPR035969">
    <property type="entry name" value="Rab-GAP_TBC_sf"/>
</dbReference>
<dbReference type="InterPro" id="IPR050302">
    <property type="entry name" value="Rab_GAP_TBC_domain"/>
</dbReference>
<dbReference type="PANTHER" id="PTHR47219">
    <property type="entry name" value="RAB GTPASE-ACTIVATING PROTEIN 1-LIKE"/>
    <property type="match status" value="1"/>
</dbReference>
<dbReference type="PANTHER" id="PTHR47219:SF22">
    <property type="entry name" value="RAB-GAP TBC DOMAIN-CONTAINING PROTEIN"/>
    <property type="match status" value="1"/>
</dbReference>
<dbReference type="Pfam" id="PF00566">
    <property type="entry name" value="RabGAP-TBC"/>
    <property type="match status" value="1"/>
</dbReference>
<dbReference type="SMART" id="SM00164">
    <property type="entry name" value="TBC"/>
    <property type="match status" value="1"/>
</dbReference>
<dbReference type="SUPFAM" id="SSF47923">
    <property type="entry name" value="Ypt/Rab-GAP domain of gyp1p"/>
    <property type="match status" value="2"/>
</dbReference>
<dbReference type="PROSITE" id="PS50086">
    <property type="entry name" value="TBC_RABGAP"/>
    <property type="match status" value="1"/>
</dbReference>
<name>EAT17_CAEEL</name>
<proteinExistence type="evidence at protein level"/>
<accession>S6F527</accession>
<accession>Q19101</accession>
<accession>S6EZL6</accession>
<accession>S6FMY8</accession>
<accession>S6FWN8</accession>
<accession>U4PBB2</accession>
<evidence type="ECO:0000255" key="1"/>
<evidence type="ECO:0000255" key="2">
    <source>
        <dbReference type="PROSITE-ProRule" id="PRU00163"/>
    </source>
</evidence>
<evidence type="ECO:0000256" key="3">
    <source>
        <dbReference type="SAM" id="MobiDB-lite"/>
    </source>
</evidence>
<evidence type="ECO:0000269" key="4">
    <source>
    </source>
</evidence>
<evidence type="ECO:0000303" key="5">
    <source>
    </source>
</evidence>
<evidence type="ECO:0000305" key="6"/>
<evidence type="ECO:0000312" key="7">
    <source>
        <dbReference type="Proteomes" id="UP000001940"/>
    </source>
</evidence>
<evidence type="ECO:0000312" key="8">
    <source>
        <dbReference type="WormBase" id="T24D11.1a"/>
    </source>
</evidence>
<evidence type="ECO:0000312" key="9">
    <source>
        <dbReference type="WormBase" id="T24D11.1b"/>
    </source>
</evidence>
<evidence type="ECO:0000312" key="10">
    <source>
        <dbReference type="WormBase" id="T24D11.1c"/>
    </source>
</evidence>
<evidence type="ECO:0000312" key="11">
    <source>
        <dbReference type="WormBase" id="T24D11.1d"/>
    </source>
</evidence>
<evidence type="ECO:0000312" key="12">
    <source>
        <dbReference type="WormBase" id="T24D11.1e"/>
    </source>
</evidence>
<evidence type="ECO:0000312" key="13">
    <source>
        <dbReference type="WormBase" id="T24D11.1f"/>
    </source>
</evidence>
<protein>
    <recommendedName>
        <fullName evidence="5">Rab GTPase-activating protein eat-17</fullName>
        <shortName evidence="5">RabGAP eat-17</shortName>
    </recommendedName>
    <alternativeName>
        <fullName evidence="6">Abnormal pharyngeal pumping eat-17</fullName>
    </alternativeName>
</protein>